<feature type="chain" id="PRO_0000053926" description="Probable voltage-dependent N-type calcium channel subunit alpha-1B">
    <location>
        <begin position="1"/>
        <end position="2326"/>
    </location>
</feature>
<feature type="topological domain" description="Cytoplasmic" evidence="2">
    <location>
        <begin position="1"/>
        <end position="83"/>
    </location>
</feature>
<feature type="transmembrane region" description="Helical; Name=S1 of repeat I" evidence="2">
    <location>
        <begin position="84"/>
        <end position="107"/>
    </location>
</feature>
<feature type="topological domain" description="Extracellular" evidence="2">
    <location>
        <begin position="108"/>
        <end position="124"/>
    </location>
</feature>
<feature type="transmembrane region" description="Helical; Name=S2 of repeat I" evidence="2">
    <location>
        <begin position="125"/>
        <end position="145"/>
    </location>
</feature>
<feature type="topological domain" description="Cytoplasmic" evidence="2">
    <location>
        <begin position="146"/>
        <end position="156"/>
    </location>
</feature>
<feature type="transmembrane region" description="Helical; Name=S3 of repeat I" evidence="2">
    <location>
        <begin position="157"/>
        <end position="175"/>
    </location>
</feature>
<feature type="topological domain" description="Extracellular" evidence="2">
    <location>
        <begin position="176"/>
        <end position="180"/>
    </location>
</feature>
<feature type="transmembrane region" description="Helical; Name=S4 of repeat I" evidence="2">
    <location>
        <begin position="181"/>
        <end position="204"/>
    </location>
</feature>
<feature type="topological domain" description="Cytoplasmic" evidence="2">
    <location>
        <begin position="205"/>
        <end position="214"/>
    </location>
</feature>
<feature type="transmembrane region" description="Helical; Name=S5 of repeat I" evidence="2">
    <location>
        <begin position="215"/>
        <end position="237"/>
    </location>
</feature>
<feature type="topological domain" description="Extracellular" evidence="2">
    <location>
        <begin position="238"/>
        <end position="323"/>
    </location>
</feature>
<feature type="transmembrane region" description="Helical; Name=S6 of repeat I" evidence="2">
    <location>
        <begin position="324"/>
        <end position="348"/>
    </location>
</feature>
<feature type="topological domain" description="Cytoplasmic" evidence="2">
    <location>
        <begin position="349"/>
        <end position="472"/>
    </location>
</feature>
<feature type="transmembrane region" description="Helical; Name=S1 of repeat II" evidence="2">
    <location>
        <begin position="473"/>
        <end position="491"/>
    </location>
</feature>
<feature type="topological domain" description="Extracellular" evidence="2">
    <location>
        <begin position="492"/>
        <end position="501"/>
    </location>
</feature>
<feature type="transmembrane region" description="Helical; Name=S2 of repeat II" evidence="2">
    <location>
        <begin position="502"/>
        <end position="524"/>
    </location>
</feature>
<feature type="topological domain" description="Cytoplasmic" evidence="2">
    <location>
        <begin position="525"/>
        <end position="534"/>
    </location>
</feature>
<feature type="transmembrane region" description="Helical; Name=S3 of repeat II" evidence="2">
    <location>
        <begin position="535"/>
        <end position="556"/>
    </location>
</feature>
<feature type="topological domain" description="Extracellular" evidence="2">
    <location>
        <begin position="557"/>
        <end position="563"/>
    </location>
</feature>
<feature type="transmembrane region" description="Helical; Name=S4 of repeat II" evidence="2">
    <location>
        <begin position="564"/>
        <end position="576"/>
    </location>
</feature>
<feature type="topological domain" description="Cytoplasmic" evidence="2">
    <location>
        <begin position="577"/>
        <end position="594"/>
    </location>
</feature>
<feature type="transmembrane region" description="Helical; Name=S5 of repeat II" evidence="2">
    <location>
        <begin position="595"/>
        <end position="620"/>
    </location>
</feature>
<feature type="topological domain" description="Extracellular" evidence="2">
    <location>
        <begin position="621"/>
        <end position="672"/>
    </location>
</feature>
<feature type="transmembrane region" description="Helical; Name=S6 of repeat II" evidence="2">
    <location>
        <begin position="673"/>
        <end position="699"/>
    </location>
</feature>
<feature type="topological domain" description="Cytoplasmic" evidence="2">
    <location>
        <begin position="700"/>
        <end position="1148"/>
    </location>
</feature>
<feature type="transmembrane region" description="Helical; Name=S1 of repeat III" evidence="2">
    <location>
        <begin position="1149"/>
        <end position="1167"/>
    </location>
</feature>
<feature type="topological domain" description="Extracellular" evidence="2">
    <location>
        <begin position="1168"/>
        <end position="1175"/>
    </location>
</feature>
<feature type="transmembrane region" description="Helical; Name=S2 of repeat III" evidence="2">
    <location>
        <begin position="1176"/>
        <end position="1200"/>
    </location>
</feature>
<feature type="topological domain" description="Cytoplasmic" evidence="2">
    <location>
        <begin position="1201"/>
        <end position="1214"/>
    </location>
</feature>
<feature type="transmembrane region" description="Helical; Name=S3 of repeat III" evidence="2">
    <location>
        <begin position="1215"/>
        <end position="1235"/>
    </location>
</feature>
<feature type="topological domain" description="Extracellular" evidence="2">
    <location>
        <begin position="1236"/>
        <end position="1241"/>
    </location>
</feature>
<feature type="transmembrane region" description="Helical; Name=S4 of repeat III" evidence="2">
    <location>
        <begin position="1242"/>
        <end position="1262"/>
    </location>
</feature>
<feature type="topological domain" description="Cytoplasmic" evidence="2">
    <location>
        <begin position="1263"/>
        <end position="1280"/>
    </location>
</feature>
<feature type="transmembrane region" description="Helical; Name=S5 of repeat III" evidence="2">
    <location>
        <begin position="1281"/>
        <end position="1300"/>
    </location>
</feature>
<feature type="topological domain" description="Extracellular" evidence="2">
    <location>
        <begin position="1301"/>
        <end position="1387"/>
    </location>
</feature>
<feature type="transmembrane region" description="Helical; Name=S6 of repeat III" evidence="2">
    <location>
        <begin position="1388"/>
        <end position="1413"/>
    </location>
</feature>
<feature type="topological domain" description="Cytoplasmic" evidence="2">
    <location>
        <begin position="1414"/>
        <end position="1468"/>
    </location>
</feature>
<feature type="transmembrane region" description="Helical; Name=S1 of repeat IV" evidence="2">
    <location>
        <begin position="1469"/>
        <end position="1487"/>
    </location>
</feature>
<feature type="topological domain" description="Extracellular" evidence="2">
    <location>
        <begin position="1488"/>
        <end position="1495"/>
    </location>
</feature>
<feature type="transmembrane region" description="Helical; Name=S2 of repeat IV" evidence="2">
    <location>
        <begin position="1496"/>
        <end position="1520"/>
    </location>
</feature>
<feature type="topological domain" description="Cytoplasmic" evidence="2">
    <location>
        <begin position="1521"/>
        <end position="1530"/>
    </location>
</feature>
<feature type="transmembrane region" description="Helical; Name=S3 of repeat IV" evidence="2">
    <location>
        <begin position="1531"/>
        <end position="1552"/>
    </location>
</feature>
<feature type="topological domain" description="Extracellular" evidence="2">
    <location>
        <begin position="1553"/>
        <end position="1558"/>
    </location>
</feature>
<feature type="transmembrane region" description="Helical; Name=S4 of repeat IV" evidence="2">
    <location>
        <begin position="1559"/>
        <end position="1577"/>
    </location>
</feature>
<feature type="topological domain" description="Cytoplasmic" evidence="2">
    <location>
        <begin position="1578"/>
        <end position="1596"/>
    </location>
</feature>
<feature type="transmembrane region" description="Helical; Name=S5 of repeat IV" evidence="2">
    <location>
        <begin position="1597"/>
        <end position="1616"/>
    </location>
</feature>
<feature type="topological domain" description="Extracellular" evidence="2">
    <location>
        <begin position="1617"/>
        <end position="1680"/>
    </location>
</feature>
<feature type="transmembrane region" description="Helical; Name=S6 of repeat IV" evidence="2">
    <location>
        <begin position="1681"/>
        <end position="1704"/>
    </location>
</feature>
<feature type="topological domain" description="Cytoplasmic" evidence="2">
    <location>
        <begin position="1705"/>
        <end position="2326"/>
    </location>
</feature>
<feature type="repeat" description="I">
    <location>
        <begin position="75"/>
        <end position="351"/>
    </location>
</feature>
<feature type="repeat" description="II">
    <location>
        <begin position="458"/>
        <end position="702"/>
    </location>
</feature>
<feature type="repeat" description="III">
    <location>
        <begin position="1134"/>
        <end position="1416"/>
    </location>
</feature>
<feature type="repeat" description="IV">
    <location>
        <begin position="1453"/>
        <end position="1708"/>
    </location>
</feature>
<feature type="domain" description="EF-hand" evidence="4">
    <location>
        <begin position="1721"/>
        <end position="1756"/>
    </location>
</feature>
<feature type="region of interest" description="Disordered" evidence="5">
    <location>
        <begin position="17"/>
        <end position="37"/>
    </location>
</feature>
<feature type="region of interest" description="Binding to the beta subunit" evidence="1">
    <location>
        <begin position="371"/>
        <end position="388"/>
    </location>
</feature>
<feature type="region of interest" description="Disordered" evidence="5">
    <location>
        <begin position="793"/>
        <end position="1048"/>
    </location>
</feature>
<feature type="region of interest" description="Disordered" evidence="5">
    <location>
        <begin position="1897"/>
        <end position="1916"/>
    </location>
</feature>
<feature type="region of interest" description="Disordered" evidence="5">
    <location>
        <begin position="1932"/>
        <end position="1954"/>
    </location>
</feature>
<feature type="region of interest" description="Disordered" evidence="5">
    <location>
        <begin position="2039"/>
        <end position="2242"/>
    </location>
</feature>
<feature type="region of interest" description="Disordered" evidence="5">
    <location>
        <begin position="2271"/>
        <end position="2326"/>
    </location>
</feature>
<feature type="compositionally biased region" description="Basic and acidic residues" evidence="5">
    <location>
        <begin position="796"/>
        <end position="808"/>
    </location>
</feature>
<feature type="compositionally biased region" description="Basic and acidic residues" evidence="5">
    <location>
        <begin position="854"/>
        <end position="879"/>
    </location>
</feature>
<feature type="compositionally biased region" description="Basic and acidic residues" evidence="5">
    <location>
        <begin position="886"/>
        <end position="908"/>
    </location>
</feature>
<feature type="compositionally biased region" description="Basic and acidic residues" evidence="5">
    <location>
        <begin position="935"/>
        <end position="979"/>
    </location>
</feature>
<feature type="compositionally biased region" description="Basic and acidic residues" evidence="5">
    <location>
        <begin position="994"/>
        <end position="1011"/>
    </location>
</feature>
<feature type="compositionally biased region" description="Polar residues" evidence="5">
    <location>
        <begin position="1020"/>
        <end position="1032"/>
    </location>
</feature>
<feature type="compositionally biased region" description="Polar residues" evidence="5">
    <location>
        <begin position="1897"/>
        <end position="1912"/>
    </location>
</feature>
<feature type="compositionally biased region" description="Basic and acidic residues" evidence="5">
    <location>
        <begin position="1932"/>
        <end position="1948"/>
    </location>
</feature>
<feature type="compositionally biased region" description="Basic residues" evidence="5">
    <location>
        <begin position="2039"/>
        <end position="2055"/>
    </location>
</feature>
<feature type="compositionally biased region" description="Basic and acidic residues" evidence="5">
    <location>
        <begin position="2056"/>
        <end position="2069"/>
    </location>
</feature>
<feature type="compositionally biased region" description="Basic and acidic residues" evidence="5">
    <location>
        <begin position="2077"/>
        <end position="2104"/>
    </location>
</feature>
<feature type="compositionally biased region" description="Polar residues" evidence="5">
    <location>
        <begin position="2142"/>
        <end position="2161"/>
    </location>
</feature>
<feature type="compositionally biased region" description="Polar residues" evidence="5">
    <location>
        <begin position="2275"/>
        <end position="2289"/>
    </location>
</feature>
<feature type="compositionally biased region" description="Polar residues" evidence="5">
    <location>
        <begin position="2302"/>
        <end position="2311"/>
    </location>
</feature>
<feature type="binding site" evidence="2">
    <location>
        <position position="534"/>
    </location>
    <ligand>
        <name>a 1,2-diacyl-sn-glycero-3-phospho-(1D-myo-inositol-4,5-bisphosphate)</name>
        <dbReference type="ChEBI" id="CHEBI:58456"/>
    </ligand>
</feature>
<feature type="binding site" evidence="2">
    <location>
        <position position="574"/>
    </location>
    <ligand>
        <name>a 1,2-diacyl-sn-glycero-3-phospho-(1D-myo-inositol-4,5-bisphosphate)</name>
        <dbReference type="ChEBI" id="CHEBI:58456"/>
    </ligand>
</feature>
<feature type="binding site" evidence="2">
    <location>
        <position position="577"/>
    </location>
    <ligand>
        <name>a 1,2-diacyl-sn-glycero-3-phospho-(1D-myo-inositol-4,5-bisphosphate)</name>
        <dbReference type="ChEBI" id="CHEBI:58456"/>
    </ligand>
</feature>
<feature type="binding site" evidence="6">
    <location>
        <position position="1734"/>
    </location>
    <ligand>
        <name>Ca(2+)</name>
        <dbReference type="ChEBI" id="CHEBI:29108"/>
    </ligand>
</feature>
<feature type="binding site" evidence="6">
    <location>
        <position position="1740"/>
    </location>
    <ligand>
        <name>Ca(2+)</name>
        <dbReference type="ChEBI" id="CHEBI:29108"/>
    </ligand>
</feature>
<feature type="binding site" evidence="6">
    <location>
        <position position="1745"/>
    </location>
    <ligand>
        <name>Ca(2+)</name>
        <dbReference type="ChEBI" id="CHEBI:29108"/>
    </ligand>
</feature>
<feature type="site" description="Calcium ion selectivity and permeability" evidence="1">
    <location>
        <position position="306"/>
    </location>
</feature>
<feature type="site" description="Calcium ion selectivity and permeability" evidence="1">
    <location>
        <position position="653"/>
    </location>
</feature>
<feature type="site" description="Calcium ion selectivity and permeability" evidence="1">
    <location>
        <position position="1362"/>
    </location>
</feature>
<feature type="site" description="Calcium ion selectivity and permeability" evidence="1">
    <location>
        <position position="1650"/>
    </location>
</feature>
<feature type="glycosylation site" description="N-linked (GlcNAc...) asparagine" evidence="3">
    <location>
        <position position="271"/>
    </location>
</feature>
<feature type="glycosylation site" description="N-linked (GlcNAc...) asparagine" evidence="3">
    <location>
        <position position="1558"/>
    </location>
</feature>
<feature type="splice variant" id="VSP_000884" description="In isoform 2." evidence="6">
    <original>D</original>
    <variation>DDGLGIIYEPEQKPEDIQSVY</variation>
    <location>
        <position position="406"/>
    </location>
</feature>
<name>CAC1B_DIPOM</name>
<evidence type="ECO:0000250" key="1"/>
<evidence type="ECO:0000250" key="2">
    <source>
        <dbReference type="UniProtKB" id="Q00975"/>
    </source>
</evidence>
<evidence type="ECO:0000255" key="3"/>
<evidence type="ECO:0000255" key="4">
    <source>
        <dbReference type="PROSITE-ProRule" id="PRU00448"/>
    </source>
</evidence>
<evidence type="ECO:0000256" key="5">
    <source>
        <dbReference type="SAM" id="MobiDB-lite"/>
    </source>
</evidence>
<evidence type="ECO:0000305" key="6"/>
<comment type="function">
    <text evidence="1">The isoform alpha-1B gives rise to N-type calcium currents. N-type calcium channels belong to the 'high-voltage activated' (HVA) group (By similarity).</text>
</comment>
<comment type="subunit">
    <text evidence="1">Multisubunit complex consisting of alpha-1, alpha-2, beta and delta subunits in a 1:1:1:1 ratio. The channel activity is directed by the pore-forming and voltage-sensitive alpha-1 subunit. In many cases, this subunit is sufficient to generate voltage-sensitive calcium channel activity. The auxiliary subunits beta and alpha-2/delta linked by a disulfide bridge regulate the channel activity (By similarity).</text>
</comment>
<comment type="subcellular location">
    <subcellularLocation>
        <location evidence="2">Membrane</location>
        <topology evidence="2">Multi-pass membrane protein</topology>
    </subcellularLocation>
</comment>
<comment type="alternative products">
    <event type="alternative splicing"/>
    <isoform>
        <id>P56698-1</id>
        <name>1</name>
        <sequence type="displayed"/>
    </isoform>
    <isoform>
        <id>P56698-2</id>
        <name>2</name>
        <sequence type="described" ref="VSP_000884"/>
    </isoform>
    <text>Additional isoforms seem to exist.</text>
</comment>
<comment type="tissue specificity">
    <text>Expression is higher in the electric lobe than in the forebrain.</text>
</comment>
<comment type="domain">
    <text>Each of the four internal repeats contains five hydrophobic transmembrane segments (S1, S2, S3, S5, S6) and one positively charged transmembrane segment (S4). S4 segments probably represent the voltage-sensor and are characterized by a series of positively charged amino acids at every third position.</text>
</comment>
<comment type="PTM">
    <text evidence="1">Phosphorylated in vitro by CaM-kinase II, PKA, PKC and CGPK.</text>
</comment>
<comment type="similarity">
    <text evidence="6">Belongs to the calcium channel alpha-1 subunit (TC 1.A.1.11) family.</text>
</comment>
<reference key="1">
    <citation type="journal article" date="1993" name="Proc. Natl. Acad. Sci. U.S.A.">
        <title>Molecular diversity of Ca2+ channel alpha 1 subunits from the marine ray Discopyge ommata.</title>
        <authorList>
            <person name="Horne W.A."/>
            <person name="Ellinor P.T."/>
            <person name="Inman I."/>
            <person name="Zhou M."/>
            <person name="Tsien R.W."/>
            <person name="Schwarz T.L."/>
        </authorList>
    </citation>
    <scope>NUCLEOTIDE SEQUENCE [GENOMIC DNA] (ISOFORMS 1 AND 2)</scope>
    <source>
        <tissue>Electric lobe</tissue>
    </source>
</reference>
<dbReference type="EMBL" id="L12532">
    <property type="status" value="NOT_ANNOTATED_CDS"/>
    <property type="molecule type" value="Genomic_DNA"/>
</dbReference>
<dbReference type="PIR" id="B47447">
    <property type="entry name" value="B47447"/>
</dbReference>
<dbReference type="SMR" id="P56698"/>
<dbReference type="GO" id="GO:0043025">
    <property type="term" value="C:neuronal cell body"/>
    <property type="evidence" value="ECO:0007669"/>
    <property type="project" value="TreeGrafter"/>
</dbReference>
<dbReference type="GO" id="GO:0045202">
    <property type="term" value="C:synapse"/>
    <property type="evidence" value="ECO:0007669"/>
    <property type="project" value="GOC"/>
</dbReference>
<dbReference type="GO" id="GO:0005891">
    <property type="term" value="C:voltage-gated calcium channel complex"/>
    <property type="evidence" value="ECO:0007669"/>
    <property type="project" value="InterPro"/>
</dbReference>
<dbReference type="GO" id="GO:0005509">
    <property type="term" value="F:calcium ion binding"/>
    <property type="evidence" value="ECO:0007669"/>
    <property type="project" value="InterPro"/>
</dbReference>
<dbReference type="GO" id="GO:0008331">
    <property type="term" value="F:high voltage-gated calcium channel activity"/>
    <property type="evidence" value="ECO:0007669"/>
    <property type="project" value="TreeGrafter"/>
</dbReference>
<dbReference type="GO" id="GO:0098703">
    <property type="term" value="P:calcium ion import across plasma membrane"/>
    <property type="evidence" value="ECO:0007669"/>
    <property type="project" value="TreeGrafter"/>
</dbReference>
<dbReference type="GO" id="GO:0007268">
    <property type="term" value="P:chemical synaptic transmission"/>
    <property type="evidence" value="ECO:0007669"/>
    <property type="project" value="TreeGrafter"/>
</dbReference>
<dbReference type="FunFam" id="1.20.120.350:FF:000001">
    <property type="entry name" value="Voltage-dependent L-type calcium channel subunit alpha"/>
    <property type="match status" value="1"/>
</dbReference>
<dbReference type="FunFam" id="1.10.238.10:FF:000063">
    <property type="entry name" value="Voltage-dependent N-type calcium channel subunit alpha"/>
    <property type="match status" value="1"/>
</dbReference>
<dbReference type="FunFam" id="1.20.120.350:FF:000011">
    <property type="entry name" value="Voltage-dependent N-type calcium channel subunit alpha"/>
    <property type="match status" value="1"/>
</dbReference>
<dbReference type="FunFam" id="1.20.120.350:FF:000013">
    <property type="entry name" value="Voltage-dependent N-type calcium channel subunit alpha"/>
    <property type="match status" value="1"/>
</dbReference>
<dbReference type="FunFam" id="1.20.120.350:FF:000015">
    <property type="entry name" value="Voltage-dependent N-type calcium channel subunit alpha"/>
    <property type="match status" value="1"/>
</dbReference>
<dbReference type="FunFam" id="1.10.287.70:FF:000023">
    <property type="entry name" value="Voltage-dependent R-type calcium channel subunit alpha"/>
    <property type="match status" value="1"/>
</dbReference>
<dbReference type="FunFam" id="1.10.287.70:FF:000025">
    <property type="entry name" value="Voltage-dependent R-type calcium channel subunit alpha"/>
    <property type="match status" value="1"/>
</dbReference>
<dbReference type="Gene3D" id="1.10.287.70">
    <property type="match status" value="4"/>
</dbReference>
<dbReference type="Gene3D" id="6.10.250.2180">
    <property type="match status" value="1"/>
</dbReference>
<dbReference type="Gene3D" id="6.10.250.2500">
    <property type="match status" value="1"/>
</dbReference>
<dbReference type="Gene3D" id="1.20.120.350">
    <property type="entry name" value="Voltage-gated potassium channels. Chain C"/>
    <property type="match status" value="4"/>
</dbReference>
<dbReference type="InterPro" id="IPR002048">
    <property type="entry name" value="EF_hand_dom"/>
</dbReference>
<dbReference type="InterPro" id="IPR031649">
    <property type="entry name" value="GPHH_dom"/>
</dbReference>
<dbReference type="InterPro" id="IPR005821">
    <property type="entry name" value="Ion_trans_dom"/>
</dbReference>
<dbReference type="InterPro" id="IPR014873">
    <property type="entry name" value="VDCC_a1su_IQ"/>
</dbReference>
<dbReference type="InterPro" id="IPR050599">
    <property type="entry name" value="VDCC_alpha-1_subunit"/>
</dbReference>
<dbReference type="InterPro" id="IPR005447">
    <property type="entry name" value="VDCC_N_a1su"/>
</dbReference>
<dbReference type="InterPro" id="IPR002077">
    <property type="entry name" value="VDCCAlpha1"/>
</dbReference>
<dbReference type="InterPro" id="IPR027359">
    <property type="entry name" value="Volt_channel_dom_sf"/>
</dbReference>
<dbReference type="PANTHER" id="PTHR45628">
    <property type="entry name" value="VOLTAGE-DEPENDENT CALCIUM CHANNEL TYPE A SUBUNIT ALPHA-1"/>
    <property type="match status" value="1"/>
</dbReference>
<dbReference type="PANTHER" id="PTHR45628:SF6">
    <property type="entry name" value="VOLTAGE-DEPENDENT N-TYPE CALCIUM CHANNEL SUBUNIT ALPHA-1B"/>
    <property type="match status" value="1"/>
</dbReference>
<dbReference type="Pfam" id="PF08763">
    <property type="entry name" value="Ca_chan_IQ"/>
    <property type="match status" value="1"/>
</dbReference>
<dbReference type="Pfam" id="PF16905">
    <property type="entry name" value="GPHH"/>
    <property type="match status" value="1"/>
</dbReference>
<dbReference type="Pfam" id="PF00520">
    <property type="entry name" value="Ion_trans"/>
    <property type="match status" value="4"/>
</dbReference>
<dbReference type="PRINTS" id="PR00167">
    <property type="entry name" value="CACHANNEL"/>
</dbReference>
<dbReference type="PRINTS" id="PR01631">
    <property type="entry name" value="NVDCCALPHA1"/>
</dbReference>
<dbReference type="SMART" id="SM01062">
    <property type="entry name" value="Ca_chan_IQ"/>
    <property type="match status" value="1"/>
</dbReference>
<dbReference type="SUPFAM" id="SSF81324">
    <property type="entry name" value="Voltage-gated potassium channels"/>
    <property type="match status" value="4"/>
</dbReference>
<dbReference type="PROSITE" id="PS50222">
    <property type="entry name" value="EF_HAND_2"/>
    <property type="match status" value="1"/>
</dbReference>
<protein>
    <recommendedName>
        <fullName>Probable voltage-dependent N-type calcium channel subunit alpha-1B</fullName>
    </recommendedName>
    <alternativeName>
        <fullName>DOE-4</fullName>
    </alternativeName>
    <alternativeName>
        <fullName>Voltage-gated calcium channel subunit alpha Cav2.2</fullName>
    </alternativeName>
</protein>
<organism>
    <name type="scientific">Diplobatis ommata</name>
    <name type="common">Ocellated electric ray</name>
    <name type="synonym">Discopyge ommata</name>
    <dbReference type="NCBI Taxonomy" id="1870830"/>
    <lineage>
        <taxon>Eukaryota</taxon>
        <taxon>Metazoa</taxon>
        <taxon>Chordata</taxon>
        <taxon>Craniata</taxon>
        <taxon>Vertebrata</taxon>
        <taxon>Chondrichthyes</taxon>
        <taxon>Elasmobranchii</taxon>
        <taxon>Batoidea</taxon>
        <taxon>Torpediniformes</taxon>
        <taxon>Narcinidae</taxon>
        <taxon>Diplobatis</taxon>
    </lineage>
</organism>
<accession>P56698</accession>
<proteinExistence type="evidence at transcript level"/>
<sequence>MARLGNDVPACYGGSPAGGGRGANRHAGPQAGQRGMYGSKSLAQRARTMALYNPIPVRQNCLTVNRSLFIFSEDNIIRKYAKRITEWPPFEYMILATIIANCIVLALEQHLPDGDKTPMSERLDDTEPYFIGIFCFEAGIKIIALGFAFHKGSYLRNGWNVMDFVVVLTGILTTIGTDFDLRTLRAVRVLRPLKLVSGIPSLQVVLKSIMKAMVPLLQIGLLLFFAILMFAIIGLEFYMGKFHKTCFSEETNEPVEEFPCGTKYPSRLCPNGTVCKGYWNGPNFGITNFDNILFAVLTVFQCITMEGWTDMLYTANDALGNTWNWLYFIPLIVIGSFFMLNLVLGVLSGEFAKERERVENRRAFLKLRRQQQVEQEFNRYLRWIHIAEEVMLAEEDKNAEDKCALDVLKRATTKKSKNDLINAEEGEDHFTDISSVGFNRPSLKSVKNERSSYFRRKEKRFRFFIRRMVKSQSFYWIVLCLVGLNTLCVAIVHYDQPPLLTDALYFAEFVFLGLFLTEMSLKMYGLGPRNYFHSSFNCFDFGVIVGSIFEVVWTAVKPDTSFGISVLRALRLLRIFKVTKYWNSLRNLVVSLLNSMKSIISLLFLLFLFIVVFALLGMQLFGGQFNFEDGTPPTNFDTFPAAILTVFQILTGEDWNEVMYYGIEAHGGVKKGMFSSVYFIILTLFGNYTLLNVFLAIAVDNLANAQELTKDEEEMEEANIQKNTIQKAMEVADVSPISATNLSIAAKDQQKSFKSMSIWEQRTSQLRRQHILTSQEALFNELDDEQRRMYVSSHQIRPDMKTHLDRPLVVEPRNSTRKSADKVCPSDCQEGEQERLVQPESCEAPRRSHRHRDKLGEQDKGDGALDTGEPRANSKDDKRCSHRSHSKETEKERDEKGRKGERSRSHEGGRRHHHAQSSLDDAPEREHRRHRSHRHGTEQQHREANGTKGERHSRAKDGSRSGGREGEAVSRSHHAEGAERRRKHRQKVASTNESEEKREIGEKERETVLRERRVHRVKETQPSQDSGTQGNVSLPPIGLQHLPQQPEDADNQKNIKLVTLPTGDAQNPATVNIPVTVTTPAAEMTLLPINNVAVDLENVMKPEEKKAENGDDLNEDGPRQIPPFNSMFLFSTTNPVRRACHYIVNLRYFEMCILLVITMSSIALAAEDPVQGDAPRNNVLKYLDYVFTGVFTFEMVIKMINLGLILHPGSYFRDLWNILDFIVVSGALVAFAFTGSRGKDLNTIKSLRVLRVLRPLKTIKRLPKLKAVFDCVVNSLKNVLNILIVYMLFMFIFAVIAVQLFKGKFFYCTDESKDLEKDCRGQYLVYDNDEIEAEPREWKKCDFHYDNVLWALLTLFTVSTGEGWPTVLKNSIDATEEDQGPSPSYRMEMSIFYVVYFVVFPFFFVNIFVALIIITFQEQGDKVMSDCSLEKNERACIDFAISAKPLTRYMPQNKQTFQYKMWKFVVSPPFEYLIMALIALNTIVLMMKFYNAPDPYDRMLQYLNILFTFLFSMECVLKLIGFGVLNYFRDAWNVFDFVTVLGSITDILVTELADSFINLSFLRLFRAARLIKLLRQGYTIRILLWTFVQSFKALPYVCLLIAMLFFIYAIIGMQVFGNIELDDDGAINRHNNFRTFLQAVMLLLRSATGEGWQEIMLACLNQSPCDARSGIDGDECGSNFAYFYFVSFIFFSSFLMLNLFVAVIMDNFEYLTRDSSILGPHHLDEFIRVWAEYDPGARGRITYNDMYEMLRHMCPPLGLGKKCPARVAYKRLVRMNMPIAEDGSVHFTSTLMALIRTALDVKISPGGAYQQQCDAELRKEITAVWPNLSQKFLDILVPPQRASELTVGKVYAALMIYDYYKQNKSKKVQQQQQLSGLSQTRKSFFQRVVGVLAATQEEPSSYSTSHKNSVNPLYQGGRQKEPFSWLRSRDTCAEGKKEVPESHPEEAGVTKSSSQAVEMREMGSDLNHADQSSLENYGRAASMPRLTAETQKISRPSGRVRAPIADTSPMKRSVSTLTPQRSHVMPDYSLERVIPVQMPHHHHHHHRCHHRREKKQRSLERATNRHADEEAGQLDAQLRDQSSKERERGRSQERRPPSSAEKQRYYSCDRYGSREPPQPRSTDHSRSASPSTGTEQGFHRQGSGSVNDSPLQSASGSSTPSRGRRQLPRTPLTPRPSVTYKTANSSPAHFGNLHDALPPSSPGRLSRGQSEHNHLLSGESQNRPYAGGDSRQPMGTRISSDPYLGFRSSCGSEDLELLEETLTFEVAVAATTATGRSPRTSSFTTQPPQSRRVPNGYHCNLGRSTGPSTAASKRKYYRETDEDDWC</sequence>
<keyword id="KW-0025">Alternative splicing</keyword>
<keyword id="KW-0106">Calcium</keyword>
<keyword id="KW-0107">Calcium channel</keyword>
<keyword id="KW-0109">Calcium transport</keyword>
<keyword id="KW-1015">Disulfide bond</keyword>
<keyword id="KW-0325">Glycoprotein</keyword>
<keyword id="KW-0407">Ion channel</keyword>
<keyword id="KW-0406">Ion transport</keyword>
<keyword id="KW-0472">Membrane</keyword>
<keyword id="KW-0479">Metal-binding</keyword>
<keyword id="KW-0597">Phosphoprotein</keyword>
<keyword id="KW-0677">Repeat</keyword>
<keyword id="KW-0812">Transmembrane</keyword>
<keyword id="KW-1133">Transmembrane helix</keyword>
<keyword id="KW-0813">Transport</keyword>
<keyword id="KW-0851">Voltage-gated channel</keyword>